<name>NFI_THEKO</name>
<dbReference type="EC" id="3.1.21.7" evidence="1"/>
<dbReference type="EMBL" id="AP006878">
    <property type="protein sequence ID" value="BAD85095.1"/>
    <property type="molecule type" value="Genomic_DNA"/>
</dbReference>
<dbReference type="RefSeq" id="WP_011249857.1">
    <property type="nucleotide sequence ID" value="NC_006624.1"/>
</dbReference>
<dbReference type="SMR" id="Q5JI47"/>
<dbReference type="STRING" id="69014.TK0906"/>
<dbReference type="EnsemblBacteria" id="BAD85095">
    <property type="protein sequence ID" value="BAD85095"/>
    <property type="gene ID" value="TK0906"/>
</dbReference>
<dbReference type="GeneID" id="78447421"/>
<dbReference type="KEGG" id="tko:TK0906"/>
<dbReference type="PATRIC" id="fig|69014.16.peg.885"/>
<dbReference type="eggNOG" id="arCOG00929">
    <property type="taxonomic scope" value="Archaea"/>
</dbReference>
<dbReference type="HOGENOM" id="CLU_047631_1_1_2"/>
<dbReference type="InParanoid" id="Q5JI47"/>
<dbReference type="OrthoDB" id="7885at2157"/>
<dbReference type="PhylomeDB" id="Q5JI47"/>
<dbReference type="Proteomes" id="UP000000536">
    <property type="component" value="Chromosome"/>
</dbReference>
<dbReference type="GO" id="GO:0005737">
    <property type="term" value="C:cytoplasm"/>
    <property type="evidence" value="ECO:0007669"/>
    <property type="project" value="UniProtKB-SubCell"/>
</dbReference>
<dbReference type="GO" id="GO:0043737">
    <property type="term" value="F:deoxyribonuclease V activity"/>
    <property type="evidence" value="ECO:0007669"/>
    <property type="project" value="UniProtKB-UniRule"/>
</dbReference>
<dbReference type="GO" id="GO:0000287">
    <property type="term" value="F:magnesium ion binding"/>
    <property type="evidence" value="ECO:0007669"/>
    <property type="project" value="UniProtKB-UniRule"/>
</dbReference>
<dbReference type="GO" id="GO:0016891">
    <property type="term" value="F:RNA endonuclease activity, producing 5'-phosphomonoesters"/>
    <property type="evidence" value="ECO:0000318"/>
    <property type="project" value="GO_Central"/>
</dbReference>
<dbReference type="GO" id="GO:0003727">
    <property type="term" value="F:single-stranded RNA binding"/>
    <property type="evidence" value="ECO:0000318"/>
    <property type="project" value="GO_Central"/>
</dbReference>
<dbReference type="GO" id="GO:0006281">
    <property type="term" value="P:DNA repair"/>
    <property type="evidence" value="ECO:0007669"/>
    <property type="project" value="UniProtKB-UniRule"/>
</dbReference>
<dbReference type="CDD" id="cd06559">
    <property type="entry name" value="Endonuclease_V"/>
    <property type="match status" value="1"/>
</dbReference>
<dbReference type="Gene3D" id="3.30.2170.10">
    <property type="entry name" value="archaeoglobus fulgidus dsm 4304 superfamily"/>
    <property type="match status" value="1"/>
</dbReference>
<dbReference type="HAMAP" id="MF_00801">
    <property type="entry name" value="Endonuclease_5"/>
    <property type="match status" value="1"/>
</dbReference>
<dbReference type="InterPro" id="IPR007581">
    <property type="entry name" value="Endonuclease-V"/>
</dbReference>
<dbReference type="PANTHER" id="PTHR28511">
    <property type="entry name" value="ENDONUCLEASE V"/>
    <property type="match status" value="1"/>
</dbReference>
<dbReference type="PANTHER" id="PTHR28511:SF1">
    <property type="entry name" value="ENDONUCLEASE V"/>
    <property type="match status" value="1"/>
</dbReference>
<dbReference type="Pfam" id="PF04493">
    <property type="entry name" value="Endonuclease_5"/>
    <property type="match status" value="1"/>
</dbReference>
<keyword id="KW-0963">Cytoplasm</keyword>
<keyword id="KW-0227">DNA damage</keyword>
<keyword id="KW-0234">DNA repair</keyword>
<keyword id="KW-0255">Endonuclease</keyword>
<keyword id="KW-0378">Hydrolase</keyword>
<keyword id="KW-0460">Magnesium</keyword>
<keyword id="KW-0479">Metal-binding</keyword>
<keyword id="KW-0540">Nuclease</keyword>
<keyword id="KW-1185">Reference proteome</keyword>
<gene>
    <name evidence="1" type="primary">nfi</name>
    <name type="ordered locus">TK0906</name>
</gene>
<accession>Q5JI47</accession>
<comment type="function">
    <text evidence="1">DNA repair enzyme involved in the repair of deaminated bases. Selectively cleaves double-stranded DNA at the second phosphodiester bond 3' to a deoxyinosine leaving behind the intact lesion on the nicked DNA.</text>
</comment>
<comment type="catalytic activity">
    <reaction evidence="1">
        <text>Endonucleolytic cleavage at apurinic or apyrimidinic sites to products with a 5'-phosphate.</text>
        <dbReference type="EC" id="3.1.21.7"/>
    </reaction>
</comment>
<comment type="cofactor">
    <cofactor evidence="1">
        <name>Mg(2+)</name>
        <dbReference type="ChEBI" id="CHEBI:18420"/>
    </cofactor>
</comment>
<comment type="subcellular location">
    <subcellularLocation>
        <location evidence="1">Cytoplasm</location>
    </subcellularLocation>
</comment>
<comment type="similarity">
    <text evidence="1">Belongs to the endonuclease V family.</text>
</comment>
<protein>
    <recommendedName>
        <fullName evidence="1">Endonuclease V</fullName>
        <ecNumber evidence="1">3.1.21.7</ecNumber>
    </recommendedName>
    <alternativeName>
        <fullName evidence="1">Deoxyinosine 3'endonuclease</fullName>
    </alternativeName>
    <alternativeName>
        <fullName evidence="1">Deoxyribonuclease V</fullName>
        <shortName evidence="1">DNase V</shortName>
    </alternativeName>
</protein>
<proteinExistence type="inferred from homology"/>
<evidence type="ECO:0000255" key="1">
    <source>
        <dbReference type="HAMAP-Rule" id="MF_00801"/>
    </source>
</evidence>
<feature type="chain" id="PRO_0000159693" description="Endonuclease V">
    <location>
        <begin position="1"/>
        <end position="197"/>
    </location>
</feature>
<feature type="binding site" evidence="1">
    <location>
        <position position="37"/>
    </location>
    <ligand>
        <name>Mg(2+)</name>
        <dbReference type="ChEBI" id="CHEBI:18420"/>
    </ligand>
</feature>
<feature type="binding site" evidence="1">
    <location>
        <position position="101"/>
    </location>
    <ligand>
        <name>Mg(2+)</name>
        <dbReference type="ChEBI" id="CHEBI:18420"/>
    </ligand>
</feature>
<feature type="site" description="Interaction with target DNA" evidence="1">
    <location>
        <position position="73"/>
    </location>
</feature>
<reference key="1">
    <citation type="journal article" date="2005" name="Genome Res.">
        <title>Complete genome sequence of the hyperthermophilic archaeon Thermococcus kodakaraensis KOD1 and comparison with Pyrococcus genomes.</title>
        <authorList>
            <person name="Fukui T."/>
            <person name="Atomi H."/>
            <person name="Kanai T."/>
            <person name="Matsumi R."/>
            <person name="Fujiwara S."/>
            <person name="Imanaka T."/>
        </authorList>
    </citation>
    <scope>NUCLEOTIDE SEQUENCE [LARGE SCALE GENOMIC DNA]</scope>
    <source>
        <strain>ATCC BAA-918 / JCM 12380 / KOD1</strain>
    </source>
</reference>
<organism>
    <name type="scientific">Thermococcus kodakarensis (strain ATCC BAA-918 / JCM 12380 / KOD1)</name>
    <name type="common">Pyrococcus kodakaraensis (strain KOD1)</name>
    <dbReference type="NCBI Taxonomy" id="69014"/>
    <lineage>
        <taxon>Archaea</taxon>
        <taxon>Methanobacteriati</taxon>
        <taxon>Methanobacteriota</taxon>
        <taxon>Thermococci</taxon>
        <taxon>Thermococcales</taxon>
        <taxon>Thermococcaceae</taxon>
        <taxon>Thermococcus</taxon>
    </lineage>
</organism>
<sequence>MSEGLFKKLEEVQRKLAERIVERPLEVSKIKTVGAVDVSYRDERARAAFVLCSFPDCELLKQRVVEVDVSFPYIPTFFFLRETRPVLIALGKERPDVLLVEGHGRAHPRGYGLASHIGLVLGIPTIGISKRLLRGTPEGSWVKVGKAYVSVGHLIDLPSAVEVVKTLNKNGYPLPLRIADRLSRGHTSWSGGVNDEH</sequence>